<sequence>MKRISTTITTTITITTGNGAG</sequence>
<keyword id="KW-0028">Amino-acid biosynthesis</keyword>
<keyword id="KW-0428">Leader peptide</keyword>
<keyword id="KW-0791">Threonine biosynthesis</keyword>
<dbReference type="EMBL" id="AP009240">
    <property type="protein sequence ID" value="BAG75525.1"/>
    <property type="molecule type" value="Genomic_DNA"/>
</dbReference>
<dbReference type="RefSeq" id="WP_001386572.1">
    <property type="nucleotide sequence ID" value="NC_011415.1"/>
</dbReference>
<dbReference type="GeneID" id="93777441"/>
<dbReference type="KEGG" id="ecy:ECSE_0001"/>
<dbReference type="HOGENOM" id="CLU_221491_0_1_6"/>
<dbReference type="Proteomes" id="UP000008199">
    <property type="component" value="Chromosome"/>
</dbReference>
<dbReference type="GO" id="GO:0009088">
    <property type="term" value="P:threonine biosynthetic process"/>
    <property type="evidence" value="ECO:0007669"/>
    <property type="project" value="UniProtKB-UniRule"/>
</dbReference>
<dbReference type="GO" id="GO:0031556">
    <property type="term" value="P:transcriptional attenuation by ribosome"/>
    <property type="evidence" value="ECO:0007669"/>
    <property type="project" value="UniProtKB-UniRule"/>
</dbReference>
<dbReference type="HAMAP" id="MF_01907">
    <property type="entry name" value="Leader_Thr"/>
    <property type="match status" value="1"/>
</dbReference>
<dbReference type="InterPro" id="IPR011720">
    <property type="entry name" value="Thr_lead_pept"/>
</dbReference>
<dbReference type="NCBIfam" id="NF007329">
    <property type="entry name" value="PRK09816.1"/>
    <property type="match status" value="1"/>
</dbReference>
<dbReference type="NCBIfam" id="TIGR02077">
    <property type="entry name" value="thr_lead_pep"/>
    <property type="match status" value="1"/>
</dbReference>
<dbReference type="Pfam" id="PF08254">
    <property type="entry name" value="Leader_Thr"/>
    <property type="match status" value="1"/>
</dbReference>
<name>LPT_ECOSE</name>
<accession>B6HYZ8</accession>
<reference key="1">
    <citation type="journal article" date="2008" name="DNA Res.">
        <title>Complete genome sequence and comparative analysis of the wild-type commensal Escherichia coli strain SE11 isolated from a healthy adult.</title>
        <authorList>
            <person name="Oshima K."/>
            <person name="Toh H."/>
            <person name="Ogura Y."/>
            <person name="Sasamoto H."/>
            <person name="Morita H."/>
            <person name="Park S.-H."/>
            <person name="Ooka T."/>
            <person name="Iyoda S."/>
            <person name="Taylor T.D."/>
            <person name="Hayashi T."/>
            <person name="Itoh K."/>
            <person name="Hattori M."/>
        </authorList>
    </citation>
    <scope>NUCLEOTIDE SEQUENCE [LARGE SCALE GENOMIC DNA]</scope>
    <source>
        <strain>SE11</strain>
    </source>
</reference>
<gene>
    <name evidence="1" type="primary">thrL</name>
    <name type="ordered locus">ECSE_0001</name>
</gene>
<organism>
    <name type="scientific">Escherichia coli (strain SE11)</name>
    <dbReference type="NCBI Taxonomy" id="409438"/>
    <lineage>
        <taxon>Bacteria</taxon>
        <taxon>Pseudomonadati</taxon>
        <taxon>Pseudomonadota</taxon>
        <taxon>Gammaproteobacteria</taxon>
        <taxon>Enterobacterales</taxon>
        <taxon>Enterobacteriaceae</taxon>
        <taxon>Escherichia</taxon>
    </lineage>
</organism>
<evidence type="ECO:0000255" key="1">
    <source>
        <dbReference type="HAMAP-Rule" id="MF_01907"/>
    </source>
</evidence>
<proteinExistence type="inferred from homology"/>
<protein>
    <recommendedName>
        <fullName evidence="1">thr operon leader peptide</fullName>
    </recommendedName>
    <alternativeName>
        <fullName evidence="1">thr operon attenuator</fullName>
    </alternativeName>
</protein>
<comment type="function">
    <text evidence="1">This protein is involved in control of the biosynthesis of threonine.</text>
</comment>
<comment type="similarity">
    <text evidence="1">Belongs to the thr operon leader peptide family.</text>
</comment>
<feature type="peptide" id="PRO_1000188778" description="thr operon leader peptide">
    <location>
        <begin position="1"/>
        <end position="21"/>
    </location>
</feature>